<comment type="function">
    <text evidence="5 6 17 19">A minor component of the gas vesicle, also found in soluble extracts (PubMed:21158390). May play a role in transcription and/or RNA stability and in GV assembly (Probable) (PubMed:35966690, PubMed:8606186). Gas vesicles are hollow, gas filled proteinaceous nanostructures found in several microbial planktonic microorganisms. They allow positioning of halobacteria at the optimal depth for growth in the poorly aerated, shallow brine pools of their habitat (PubMed:33711860).</text>
</comment>
<comment type="function">
    <text evidence="2 3 4 8">Expression of a 9.5 kb p-vac DNA fragment containing 2 divergently transcribed regions (gvpD-gvpE-gvpF-gvpG-gvpH-gvpI-gvpJ-gvpK-gvpL-gvpM and gvpA-gvpC-gvpN-gvpO) allows H.volcanii to produce gas vesicles (PubMed:10894744, PubMed:1404376, PubMed:7651141). A minimal gas vesicle can be made in H.volcanii by gvpA1-gvpO1 gvpF1-gvpG1-gvpJ1-gvpK1-gvpL1-gvpM1; lack of enough GvpJ1 prevents formation (PubMed:10894744). The same region restores gas vesicle production in H.halobium without the p-vac locus, but it still has the c-vac locus (PubMed:1398080).</text>
</comment>
<comment type="subunit">
    <text evidence="7">Forms homodimers, forms a GvpN1-GvpO1 heterodimer, interacts with GvpC1 (via the latter's C-terminus), GvpF1, GvpI1 and GvpL1, might interact with GvpA1.</text>
</comment>
<comment type="subcellular location">
    <subcellularLocation>
        <location evidence="5">Gas vesicle</location>
    </subcellularLocation>
    <subcellularLocation>
        <location evidence="16">Cytoplasm</location>
    </subcellularLocation>
    <text evidence="15">Probably on the exterior surface of the gas vesicle.</text>
</comment>
<comment type="induction">
    <text evidence="6 10 18">Maximally transcribed in late log phase, probably part of a gvpC1-gvpO1 operon (Probable). Has several transcripts with and without other genes in the locus, expressed from early- to late-log but not in stationary phase (PubMed:8606186). Gas vesicles appear earlier when grown in static culture, possibly due to O(2)-limitation (PubMed:33711860).</text>
</comment>
<comment type="disruption phenotype">
    <text evidence="2 9 10">Gas vesicle formation is wild-type (strain NRC-1), expressed in situ (PubMed:8002589). No gas vesicle formation, strongly decreased accumulation of gvpACN transcripts (strain PHH1), expressed in H.volcanii (PubMed:10894744, PubMed:8606186).</text>
</comment>
<comment type="miscellaneous">
    <text evidence="4 6">Encoded in a 14-gene plasmid locus called p-vac which produces predominantly short, spindle-shaped gas vesicles during all stages of growth.</text>
</comment>
<comment type="similarity">
    <text evidence="14">Belongs to the gas vesicle GvpO family.</text>
</comment>
<evidence type="ECO:0000256" key="1">
    <source>
        <dbReference type="SAM" id="MobiDB-lite"/>
    </source>
</evidence>
<evidence type="ECO:0000269" key="2">
    <source>
    </source>
</evidence>
<evidence type="ECO:0000269" key="3">
    <source>
    </source>
</evidence>
<evidence type="ECO:0000269" key="4">
    <source>
    </source>
</evidence>
<evidence type="ECO:0000269" key="5">
    <source>
    </source>
</evidence>
<evidence type="ECO:0000269" key="6">
    <source>
    </source>
</evidence>
<evidence type="ECO:0000269" key="7">
    <source>
    </source>
</evidence>
<evidence type="ECO:0000269" key="8">
    <source>
    </source>
</evidence>
<evidence type="ECO:0000269" key="9">
    <source>
    </source>
</evidence>
<evidence type="ECO:0000269" key="10">
    <source>
    </source>
</evidence>
<evidence type="ECO:0000303" key="11">
    <source>
    </source>
</evidence>
<evidence type="ECO:0000303" key="12">
    <source>
    </source>
</evidence>
<evidence type="ECO:0000303" key="13">
    <source>
    </source>
</evidence>
<evidence type="ECO:0000305" key="14"/>
<evidence type="ECO:0000305" key="15">
    <source>
    </source>
</evidence>
<evidence type="ECO:0000305" key="16">
    <source>
    </source>
</evidence>
<evidence type="ECO:0000305" key="17">
    <source>
    </source>
</evidence>
<evidence type="ECO:0000305" key="18">
    <source>
    </source>
</evidence>
<evidence type="ECO:0000305" key="19">
    <source>
    </source>
</evidence>
<evidence type="ECO:0000312" key="20">
    <source>
        <dbReference type="EMBL" id="AAG20729.1"/>
    </source>
</evidence>
<name>GVPO1_HALSA</name>
<keyword id="KW-0963">Cytoplasm</keyword>
<keyword id="KW-0304">Gas vesicle</keyword>
<keyword id="KW-0614">Plasmid</keyword>
<keyword id="KW-1185">Reference proteome</keyword>
<sequence>MADPANDRSEREEGGEDDETPPASDGNPSPSANSFTLSNAQTRAREAAQDLLEHQFEGMIKAESNDEGWRTVVEVVERNAVPDTQDIIGRYEITLDGTGDVTGYELLERYRRGDMKEEL</sequence>
<feature type="chain" id="PRO_0000182702" description="Gas vesicle protein O1">
    <location>
        <begin position="1"/>
        <end position="119"/>
    </location>
</feature>
<feature type="region of interest" description="Disordered" evidence="1">
    <location>
        <begin position="1"/>
        <end position="48"/>
    </location>
</feature>
<feature type="compositionally biased region" description="Basic and acidic residues" evidence="1">
    <location>
        <begin position="1"/>
        <end position="12"/>
    </location>
</feature>
<feature type="compositionally biased region" description="Polar residues" evidence="1">
    <location>
        <begin position="26"/>
        <end position="42"/>
    </location>
</feature>
<feature type="sequence conflict" description="In Ref. 1; CAA45983." evidence="14" ref="1">
    <original>SP</original>
    <variation>PSA</variation>
    <location>
        <begin position="29"/>
        <end position="30"/>
    </location>
</feature>
<feature type="sequence conflict" description="In Ref. 1; CAA45983." evidence="14" ref="1">
    <original>R</original>
    <variation>A</variation>
    <location>
        <position position="43"/>
    </location>
</feature>
<accession>O51968</accession>
<accession>Q48313</accession>
<organism>
    <name type="scientific">Halobacterium salinarum (strain ATCC 700922 / JCM 11081 / NRC-1)</name>
    <name type="common">Halobacterium halobium</name>
    <dbReference type="NCBI Taxonomy" id="64091"/>
    <lineage>
        <taxon>Archaea</taxon>
        <taxon>Methanobacteriati</taxon>
        <taxon>Methanobacteriota</taxon>
        <taxon>Stenosarchaea group</taxon>
        <taxon>Halobacteria</taxon>
        <taxon>Halobacteriales</taxon>
        <taxon>Halobacteriaceae</taxon>
        <taxon>Halobacterium</taxon>
        <taxon>Halobacterium salinarum NRC-34001</taxon>
    </lineage>
</organism>
<reference key="1">
    <citation type="journal article" date="1992" name="J. Mol. Biol.">
        <title>Three different but related gene clusters encoding gas vesicles in halophilic archaea.</title>
        <authorList>
            <person name="Englert C."/>
            <person name="Krueger K."/>
            <person name="Offner S."/>
            <person name="Pfeifer F."/>
        </authorList>
    </citation>
    <scope>NUCLEOTIDE SEQUENCE [GENOMIC DNA]</scope>
    <scope>GAS VESICLE GENE CLUSTER</scope>
    <source>
        <strain>NRC-817</strain>
        <plasmid>pHH1</plasmid>
    </source>
</reference>
<reference key="2">
    <citation type="journal article" date="1998" name="Genome Res.">
        <title>Snapshot of a large dynamic replicon in a halophilic archaeon: megaplasmid or minichromosome?</title>
        <authorList>
            <person name="Ng W.V."/>
            <person name="Ciufo S.A."/>
            <person name="Smith T.M."/>
            <person name="Bumgarner R.E."/>
            <person name="Baskin D."/>
            <person name="Faust J."/>
            <person name="Hall B."/>
            <person name="Loretz C."/>
            <person name="Seto J."/>
            <person name="Slagel J."/>
            <person name="Hood L."/>
            <person name="DasSarma S."/>
        </authorList>
    </citation>
    <scope>NUCLEOTIDE SEQUENCE [LARGE SCALE GENOMIC DNA]</scope>
    <source>
        <strain>ATCC 700922 / JCM 11081 / NRC-1</strain>
        <plasmid>pNRC100</plasmid>
    </source>
</reference>
<reference evidence="20" key="3">
    <citation type="journal article" date="2000" name="Proc. Natl. Acad. Sci. U.S.A.">
        <title>Genome sequence of Halobacterium species NRC-1.</title>
        <authorList>
            <person name="Ng W.V."/>
            <person name="Kennedy S.P."/>
            <person name="Mahairas G.G."/>
            <person name="Berquist B."/>
            <person name="Pan M."/>
            <person name="Shukla H.D."/>
            <person name="Lasky S.R."/>
            <person name="Baliga N.S."/>
            <person name="Thorsson V."/>
            <person name="Sbrogna J."/>
            <person name="Swartzell S."/>
            <person name="Weir D."/>
            <person name="Hall J."/>
            <person name="Dahl T.A."/>
            <person name="Welti R."/>
            <person name="Goo Y.A."/>
            <person name="Leithauser B."/>
            <person name="Keller K."/>
            <person name="Cruz R."/>
            <person name="Danson M.J."/>
            <person name="Hough D.W."/>
            <person name="Maddocks D.G."/>
            <person name="Jablonski P.E."/>
            <person name="Krebs M.P."/>
            <person name="Angevine C.M."/>
            <person name="Dale H."/>
            <person name="Isenbarger T.A."/>
            <person name="Peck R.F."/>
            <person name="Pohlschroder M."/>
            <person name="Spudich J.L."/>
            <person name="Jung K.-H."/>
            <person name="Alam M."/>
            <person name="Freitas T."/>
            <person name="Hou S."/>
            <person name="Daniels C.J."/>
            <person name="Dennis P.P."/>
            <person name="Omer A.D."/>
            <person name="Ebhardt H."/>
            <person name="Lowe T.M."/>
            <person name="Liang P."/>
            <person name="Riley M."/>
            <person name="Hood L."/>
            <person name="DasSarma S."/>
        </authorList>
    </citation>
    <scope>NUCLEOTIDE SEQUENCE [LARGE SCALE GENOMIC DNA]</scope>
    <source>
        <strain>ATCC 700922 / JCM 11081 / NRC-1</strain>
        <plasmid>pNRC200</plasmid>
    </source>
</reference>
<reference key="4">
    <citation type="journal article" date="1992" name="Gene">
        <title>Genetic transformation of a halophilic archaebacterium with a gas vesicle gene cluster restores its ability to float.</title>
        <authorList>
            <person name="Halladay J.T."/>
            <person name="Ng W.L."/>
            <person name="DasSarma S."/>
        </authorList>
    </citation>
    <scope>FUNCTION</scope>
    <scope>GAS VESICLE PRODUCTION</scope>
    <source>
        <strain>ATCC 700922 / JCM 11081 / NRC-1</strain>
        <plasmid>pNRC100</plasmid>
    </source>
</reference>
<reference key="5">
    <citation type="journal article" date="1994" name="J. Bacteriol.">
        <title>Wild-type gas vesicle formation requires at least ten genes in the gvp gene cluster of Halobacterium halobium plasmid pNRC100.</title>
        <authorList>
            <person name="DasSarma S."/>
            <person name="Arora P."/>
            <person name="Lin F."/>
            <person name="Molinari E."/>
            <person name="Yin L.R."/>
        </authorList>
    </citation>
    <scope>DISRUPTION PHENOTYPE</scope>
    <source>
        <strain>ATCC 700922 / JCM 11081 / NRC-1</strain>
        <plasmid>pNRC100</plasmid>
    </source>
</reference>
<reference key="6">
    <citation type="journal article" date="1995" name="Mol. Microbiol.">
        <title>Complementation studies with the gas vesicle-encoding p-vac region of Halobacterium salinarium PHH1 reveal a regulatory role for the p-gvpDE genes.</title>
        <authorList>
            <person name="Offner S."/>
            <person name="Pfeifer F."/>
        </authorList>
    </citation>
    <scope>FUNCTION</scope>
    <scope>INDUCTION</scope>
    <source>
        <strain>PHH1</strain>
    </source>
</reference>
<reference key="7">
    <citation type="journal article" date="1996" name="J. Bacteriol.">
        <title>Functional studies of the gvpACNO operon of Halobacterium salinarium reveal that the GvpC protein shapes gas vesicles.</title>
        <authorList>
            <person name="Offner S."/>
            <person name="Wanner G."/>
            <person name="Pfeifer F."/>
        </authorList>
    </citation>
    <scope>FUNCTION</scope>
    <scope>DISRUPTION PHENOTYPE</scope>
    <source>
        <strain>PHH1</strain>
    </source>
</reference>
<reference key="8">
    <citation type="journal article" date="1997" name="Microbiology">
        <title>Growth competition between Halobacterium salinarium strain PHH1 and mutants affected in gas vesicle synthesis.</title>
        <authorList>
            <person name="Beard S.J."/>
            <person name="Hayes P.K."/>
            <person name="Walsby A.E."/>
        </authorList>
    </citation>
    <scope>FUNCTION IN BUOYANCY</scope>
    <scope>POSSIBLE INDUCTION BY OXYGEN LIMITATION</scope>
    <source>
        <strain>PHH1</strain>
    </source>
</reference>
<reference key="9">
    <citation type="journal article" date="2000" name="J. Bacteriol.">
        <title>Eight of fourteen gvp genes are sufficient for formation of gas vesicles in halophilic archaea.</title>
        <authorList>
            <person name="Offner S."/>
            <person name="Hofacker A."/>
            <person name="Wanner G."/>
            <person name="Pfeifer F."/>
        </authorList>
    </citation>
    <scope>DISRUPTION PHENOTYPE</scope>
    <source>
        <strain>PHH1</strain>
        <plasmid>pHH1</plasmid>
    </source>
</reference>
<reference key="10">
    <citation type="journal article" date="2011" name="J. Proteome Res.">
        <title>New structural proteins of Halobacterium salinarum gas vesicle revealed by comparative proteomics analysis.</title>
        <authorList>
            <person name="Chu L.J."/>
            <person name="Chen M.C."/>
            <person name="Setter J."/>
            <person name="Tsai Y.S."/>
            <person name="Yang H."/>
            <person name="Fang X."/>
            <person name="Ting Y.S."/>
            <person name="Shaffer S.A."/>
            <person name="Taylor G.K."/>
            <person name="von Haller P.D."/>
            <person name="Goodlett D.R."/>
            <person name="Ng W.V."/>
        </authorList>
    </citation>
    <scope>SUBCELLULAR LOCATION</scope>
    <scope>IDENTIFICATION BY MASS SPECTROMETRY</scope>
    <source>
        <strain>ATCC 700922 / JCM 11081 / NRC-1</strain>
    </source>
</reference>
<reference key="11">
    <citation type="journal article" date="2022" name="Front. Microbiol.">
        <title>Interaction of the gas vesicle proteins GvpA, GvpC, GvpN, and GvpO of Halobacterium salinarum.</title>
        <authorList>
            <person name="Jost A."/>
            <person name="Pfeifer F."/>
        </authorList>
    </citation>
    <scope>FUNCTION</scope>
    <scope>SUBUNIT</scope>
    <scope>SUBCELLULAR LOCATION</scope>
    <source>
        <strain>PHH1</strain>
        <plasmid>pHH1</plasmid>
    </source>
</reference>
<geneLocation type="plasmid">
    <name>pNRC100</name>
</geneLocation>
<geneLocation type="plasmid">
    <name>pNRC200</name>
</geneLocation>
<geneLocation type="plasmid">
    <name>pHH1</name>
</geneLocation>
<protein>
    <recommendedName>
        <fullName evidence="12">Gas vesicle protein O1</fullName>
        <shortName evidence="12">GvpO1</shortName>
    </recommendedName>
    <alternativeName>
        <fullName evidence="13">p-GvpO</fullName>
    </alternativeName>
</protein>
<gene>
    <name evidence="11" type="primary">gvpO</name>
    <name evidence="13" type="synonym">p-gvpO</name>
    <name type="ordered locus">VNG_5034G</name>
</gene>
<gene>
    <name evidence="20" type="primary">gvpO1</name>
    <name evidence="20" type="ordered locus">VNG_6033G</name>
</gene>
<proteinExistence type="evidence at protein level"/>
<dbReference type="EMBL" id="X64729">
    <property type="protein sequence ID" value="CAA45983.1"/>
    <property type="molecule type" value="Genomic_DNA"/>
</dbReference>
<dbReference type="EMBL" id="AF016485">
    <property type="protein sequence ID" value="AAC82812.1"/>
    <property type="molecule type" value="Genomic_DNA"/>
</dbReference>
<dbReference type="EMBL" id="AE004438">
    <property type="protein sequence ID" value="AAG20729.1"/>
    <property type="molecule type" value="Genomic_DNA"/>
</dbReference>
<dbReference type="PIR" id="T08245">
    <property type="entry name" value="T08245"/>
</dbReference>
<dbReference type="RefSeq" id="WP_010890516.1">
    <property type="nucleotide sequence ID" value="NC_001869.1"/>
</dbReference>
<dbReference type="SMR" id="O51968"/>
<dbReference type="GeneID" id="5954628"/>
<dbReference type="KEGG" id="hal:gvpO"/>
<dbReference type="KEGG" id="hal:VNG_6033G"/>
<dbReference type="PATRIC" id="fig|64091.14.peg.2102"/>
<dbReference type="HOGENOM" id="CLU_142302_0_0_2"/>
<dbReference type="InParanoid" id="O51968"/>
<dbReference type="OrthoDB" id="205220at2157"/>
<dbReference type="PhylomeDB" id="O51968"/>
<dbReference type="Proteomes" id="UP000000554">
    <property type="component" value="Plasmid pNRC100"/>
</dbReference>
<dbReference type="Proteomes" id="UP000000554">
    <property type="component" value="Plasmid pNRC200"/>
</dbReference>
<dbReference type="GO" id="GO:0005737">
    <property type="term" value="C:cytoplasm"/>
    <property type="evidence" value="ECO:0007669"/>
    <property type="project" value="UniProtKB-SubCell"/>
</dbReference>
<dbReference type="GO" id="GO:0031411">
    <property type="term" value="C:gas vesicle"/>
    <property type="evidence" value="ECO:0007669"/>
    <property type="project" value="UniProtKB-SubCell"/>
</dbReference>
<dbReference type="GO" id="GO:0031412">
    <property type="term" value="P:gas vesicle organization"/>
    <property type="evidence" value="ECO:0007669"/>
    <property type="project" value="InterPro"/>
</dbReference>
<dbReference type="InterPro" id="IPR008634">
    <property type="entry name" value="Gas-vesicle_GvpO"/>
</dbReference>
<dbReference type="Pfam" id="PF05800">
    <property type="entry name" value="GvpO"/>
    <property type="match status" value="1"/>
</dbReference>
<dbReference type="PIRSF" id="PIRSF028743">
    <property type="entry name" value="GvpO_protein"/>
    <property type="match status" value="1"/>
</dbReference>